<protein>
    <recommendedName>
        <fullName>Beta-fructofuranosidase, insoluble isoenzyme CWINV3</fullName>
    </recommendedName>
    <alternativeName>
        <fullName>6-fructan exohydrolase</fullName>
        <shortName>6-FEH</shortName>
        <ecNumber>3.2.1.80</ecNumber>
    </alternativeName>
    <alternativeName>
        <fullName>Beta-fructofuranosidase 5</fullName>
        <shortName>AtFruct5</shortName>
    </alternativeName>
    <alternativeName>
        <fullName>Cell wall beta-fructosidase 3</fullName>
    </alternativeName>
    <alternativeName>
        <fullName>Cell wall invertase 3</fullName>
        <shortName>AtcwINV3</shortName>
    </alternativeName>
    <alternativeName>
        <fullName>Sucrose hydrolase 3</fullName>
    </alternativeName>
</protein>
<keyword id="KW-0025">Alternative splicing</keyword>
<keyword id="KW-0052">Apoplast</keyword>
<keyword id="KW-0134">Cell wall</keyword>
<keyword id="KW-0903">Direct protein sequencing</keyword>
<keyword id="KW-1015">Disulfide bond</keyword>
<keyword id="KW-0325">Glycoprotein</keyword>
<keyword id="KW-0326">Glycosidase</keyword>
<keyword id="KW-0378">Hydrolase</keyword>
<keyword id="KW-1185">Reference proteome</keyword>
<keyword id="KW-0964">Secreted</keyword>
<keyword id="KW-0732">Signal</keyword>
<organism>
    <name type="scientific">Arabidopsis thaliana</name>
    <name type="common">Mouse-ear cress</name>
    <dbReference type="NCBI Taxonomy" id="3702"/>
    <lineage>
        <taxon>Eukaryota</taxon>
        <taxon>Viridiplantae</taxon>
        <taxon>Streptophyta</taxon>
        <taxon>Embryophyta</taxon>
        <taxon>Tracheophyta</taxon>
        <taxon>Spermatophyta</taxon>
        <taxon>Magnoliopsida</taxon>
        <taxon>eudicotyledons</taxon>
        <taxon>Gunneridae</taxon>
        <taxon>Pentapetalae</taxon>
        <taxon>rosids</taxon>
        <taxon>malvids</taxon>
        <taxon>Brassicales</taxon>
        <taxon>Brassicaceae</taxon>
        <taxon>Camelineae</taxon>
        <taxon>Arabidopsis</taxon>
    </lineage>
</organism>
<gene>
    <name type="primary">CWINV3</name>
    <name type="synonym">FRUCT5</name>
    <name type="ordered locus">At1g55120</name>
    <name type="ORF">T7N22.6</name>
</gene>
<reference key="1">
    <citation type="submission" date="1999-06" db="EMBL/GenBank/DDBJ databases">
        <title>Arabidopsis acid-invertase, cell wall type.</title>
        <authorList>
            <person name="Toyomasu T."/>
            <person name="Mitsuhashi W."/>
            <person name="Sasaki S."/>
        </authorList>
    </citation>
    <scope>NUCLEOTIDE SEQUENCE [MRNA]</scope>
    <source>
        <strain>cv. Landsberg erecta</strain>
    </source>
</reference>
<reference key="2">
    <citation type="journal article" date="2000" name="Nature">
        <title>Sequence and analysis of chromosome 1 of the plant Arabidopsis thaliana.</title>
        <authorList>
            <person name="Theologis A."/>
            <person name="Ecker J.R."/>
            <person name="Palm C.J."/>
            <person name="Federspiel N.A."/>
            <person name="Kaul S."/>
            <person name="White O."/>
            <person name="Alonso J."/>
            <person name="Altafi H."/>
            <person name="Araujo R."/>
            <person name="Bowman C.L."/>
            <person name="Brooks S.Y."/>
            <person name="Buehler E."/>
            <person name="Chan A."/>
            <person name="Chao Q."/>
            <person name="Chen H."/>
            <person name="Cheuk R.F."/>
            <person name="Chin C.W."/>
            <person name="Chung M.K."/>
            <person name="Conn L."/>
            <person name="Conway A.B."/>
            <person name="Conway A.R."/>
            <person name="Creasy T.H."/>
            <person name="Dewar K."/>
            <person name="Dunn P."/>
            <person name="Etgu P."/>
            <person name="Feldblyum T.V."/>
            <person name="Feng J.-D."/>
            <person name="Fong B."/>
            <person name="Fujii C.Y."/>
            <person name="Gill J.E."/>
            <person name="Goldsmith A.D."/>
            <person name="Haas B."/>
            <person name="Hansen N.F."/>
            <person name="Hughes B."/>
            <person name="Huizar L."/>
            <person name="Hunter J.L."/>
            <person name="Jenkins J."/>
            <person name="Johnson-Hopson C."/>
            <person name="Khan S."/>
            <person name="Khaykin E."/>
            <person name="Kim C.J."/>
            <person name="Koo H.L."/>
            <person name="Kremenetskaia I."/>
            <person name="Kurtz D.B."/>
            <person name="Kwan A."/>
            <person name="Lam B."/>
            <person name="Langin-Hooper S."/>
            <person name="Lee A."/>
            <person name="Lee J.M."/>
            <person name="Lenz C.A."/>
            <person name="Li J.H."/>
            <person name="Li Y.-P."/>
            <person name="Lin X."/>
            <person name="Liu S.X."/>
            <person name="Liu Z.A."/>
            <person name="Luros J.S."/>
            <person name="Maiti R."/>
            <person name="Marziali A."/>
            <person name="Militscher J."/>
            <person name="Miranda M."/>
            <person name="Nguyen M."/>
            <person name="Nierman W.C."/>
            <person name="Osborne B.I."/>
            <person name="Pai G."/>
            <person name="Peterson J."/>
            <person name="Pham P.K."/>
            <person name="Rizzo M."/>
            <person name="Rooney T."/>
            <person name="Rowley D."/>
            <person name="Sakano H."/>
            <person name="Salzberg S.L."/>
            <person name="Schwartz J.R."/>
            <person name="Shinn P."/>
            <person name="Southwick A.M."/>
            <person name="Sun H."/>
            <person name="Tallon L.J."/>
            <person name="Tambunga G."/>
            <person name="Toriumi M.J."/>
            <person name="Town C.D."/>
            <person name="Utterback T."/>
            <person name="Van Aken S."/>
            <person name="Vaysberg M."/>
            <person name="Vysotskaia V.S."/>
            <person name="Walker M."/>
            <person name="Wu D."/>
            <person name="Yu G."/>
            <person name="Fraser C.M."/>
            <person name="Venter J.C."/>
            <person name="Davis R.W."/>
        </authorList>
    </citation>
    <scope>NUCLEOTIDE SEQUENCE [LARGE SCALE GENOMIC DNA]</scope>
    <source>
        <strain>cv. Columbia</strain>
    </source>
</reference>
<reference key="3">
    <citation type="journal article" date="2017" name="Plant J.">
        <title>Araport11: a complete reannotation of the Arabidopsis thaliana reference genome.</title>
        <authorList>
            <person name="Cheng C.Y."/>
            <person name="Krishnakumar V."/>
            <person name="Chan A.P."/>
            <person name="Thibaud-Nissen F."/>
            <person name="Schobel S."/>
            <person name="Town C.D."/>
        </authorList>
    </citation>
    <scope>GENOME REANNOTATION</scope>
    <source>
        <strain>cv. Columbia</strain>
    </source>
</reference>
<reference key="4">
    <citation type="submission" date="2004-09" db="EMBL/GenBank/DDBJ databases">
        <title>Large-scale analysis of RIKEN Arabidopsis full-length (RAFL) cDNAs.</title>
        <authorList>
            <person name="Totoki Y."/>
            <person name="Seki M."/>
            <person name="Ishida J."/>
            <person name="Nakajima M."/>
            <person name="Enju A."/>
            <person name="Kamiya A."/>
            <person name="Narusaka M."/>
            <person name="Shin-i T."/>
            <person name="Nakagawa M."/>
            <person name="Sakamoto N."/>
            <person name="Oishi K."/>
            <person name="Kohara Y."/>
            <person name="Kobayashi M."/>
            <person name="Toyoda A."/>
            <person name="Sakaki Y."/>
            <person name="Sakurai T."/>
            <person name="Iida K."/>
            <person name="Akiyama K."/>
            <person name="Satou M."/>
            <person name="Toyoda T."/>
            <person name="Konagaya A."/>
            <person name="Carninci P."/>
            <person name="Kawai J."/>
            <person name="Hayashizaki Y."/>
            <person name="Shinozaki K."/>
        </authorList>
    </citation>
    <scope>NUCLEOTIDE SEQUENCE [LARGE SCALE MRNA]</scope>
    <source>
        <strain>cv. Columbia</strain>
    </source>
</reference>
<reference key="5">
    <citation type="journal article" date="2003" name="J. Exp. Bot.">
        <title>Roles of cell-wall invertases and monosaccharide transporters in the growth and development of Arabidopsis.</title>
        <authorList>
            <person name="Sherson S.M."/>
            <person name="Alford H.L."/>
            <person name="Forbes S.M."/>
            <person name="Wallace G."/>
            <person name="Smith S.M."/>
        </authorList>
    </citation>
    <scope>TISSUE SPECIFICITY</scope>
    <scope>GENE FAMILY</scope>
    <scope>NOMENCLATURE</scope>
</reference>
<reference key="6">
    <citation type="journal article" date="2005" name="Plant Cell Environ.">
        <title>Arabidopsis AtcwINV3 and 6 are not invertases but are fructan exohydrolases (FEHs) with different substrate specificities.</title>
        <authorList>
            <person name="de Coninck B."/>
            <person name="Le Roy K."/>
            <person name="Francis I."/>
            <person name="Clerens S."/>
            <person name="Vergauwen R."/>
            <person name="Halliday A.M."/>
            <person name="Smith S.M."/>
            <person name="Van Laere A."/>
            <person name="Van Den Ende W."/>
        </authorList>
    </citation>
    <scope>PROTEIN SEQUENCE OF 40-48; 155-177; 180-211; 266-283; 313-320; 341-350; 374-381; 414-426; 514-529 AND 536-553</scope>
    <scope>FUNCTION</scope>
</reference>
<reference key="7">
    <citation type="journal article" date="2006" name="J. Exp. Bot.">
        <title>Imaging photosynthesis in wounded leaves of Arabidopsis thaliana.</title>
        <authorList>
            <person name="Quilliam R.S."/>
            <person name="Swarbrick P.J."/>
            <person name="Scholes J.D."/>
            <person name="Rolfe S.A."/>
        </authorList>
    </citation>
    <scope>TISSUE SPECIFICITY</scope>
</reference>
<feature type="signal peptide" evidence="2">
    <location>
        <begin position="1"/>
        <end position="28"/>
    </location>
</feature>
<feature type="chain" id="PRO_0000348349" description="Beta-fructofuranosidase, insoluble isoenzyme CWINV3">
    <location>
        <begin position="29"/>
        <end position="594"/>
    </location>
</feature>
<feature type="active site" evidence="3">
    <location>
        <position position="53"/>
    </location>
</feature>
<feature type="binding site" evidence="1">
    <location>
        <begin position="50"/>
        <end position="53"/>
    </location>
    <ligand>
        <name>substrate</name>
    </ligand>
</feature>
<feature type="binding site" evidence="1">
    <location>
        <position position="69"/>
    </location>
    <ligand>
        <name>substrate</name>
    </ligand>
</feature>
<feature type="binding site" evidence="1">
    <location>
        <position position="77"/>
    </location>
    <ligand>
        <name>substrate</name>
    </ligand>
</feature>
<feature type="binding site" evidence="1">
    <location>
        <begin position="113"/>
        <end position="114"/>
    </location>
    <ligand>
        <name>substrate</name>
    </ligand>
</feature>
<feature type="binding site" evidence="1">
    <location>
        <begin position="179"/>
        <end position="180"/>
    </location>
    <ligand>
        <name>substrate</name>
    </ligand>
</feature>
<feature type="binding site" evidence="1">
    <location>
        <position position="235"/>
    </location>
    <ligand>
        <name>substrate</name>
    </ligand>
</feature>
<feature type="glycosylation site" description="N-linked (GlcNAc...) asparagine" evidence="7">
    <location>
        <position position="147"/>
    </location>
</feature>
<feature type="glycosylation site" description="N-linked (GlcNAc...) asparagine" evidence="2">
    <location>
        <position position="217"/>
    </location>
</feature>
<feature type="glycosylation site" description="N-linked (GlcNAc...) asparagine" evidence="2">
    <location>
        <position position="297"/>
    </location>
</feature>
<feature type="glycosylation site" description="N-linked (GlcNAc...) asparagine" evidence="7">
    <location>
        <position position="329"/>
    </location>
</feature>
<feature type="disulfide bond" evidence="1">
    <location>
        <begin position="428"/>
        <end position="480"/>
    </location>
</feature>
<feature type="sequence conflict" description="In Ref. 1; BAA89048." evidence="7" ref="1">
    <original>EPSWTD</original>
    <variation>GPELDPI</variation>
    <location>
        <begin position="418"/>
        <end position="423"/>
    </location>
</feature>
<feature type="sequence conflict" description="In Ref. 4; BAD44438." evidence="7" ref="4">
    <original>I</original>
    <variation>V</variation>
    <location>
        <position position="427"/>
    </location>
</feature>
<evidence type="ECO:0000250" key="1"/>
<evidence type="ECO:0000255" key="2"/>
<evidence type="ECO:0000255" key="3">
    <source>
        <dbReference type="PROSITE-ProRule" id="PRU10067"/>
    </source>
</evidence>
<evidence type="ECO:0000269" key="4">
    <source>
    </source>
</evidence>
<evidence type="ECO:0000269" key="5">
    <source>
    </source>
</evidence>
<evidence type="ECO:0000269" key="6">
    <source ref="6"/>
</evidence>
<evidence type="ECO:0000305" key="7"/>
<proteinExistence type="evidence at protein level"/>
<dbReference type="EC" id="3.2.1.80"/>
<dbReference type="EMBL" id="AB029310">
    <property type="protein sequence ID" value="BAA89048.1"/>
    <property type="molecule type" value="mRNA"/>
</dbReference>
<dbReference type="EMBL" id="AC073944">
    <property type="protein sequence ID" value="AAG50837.1"/>
    <property type="status" value="ALT_SEQ"/>
    <property type="molecule type" value="Genomic_DNA"/>
</dbReference>
<dbReference type="EMBL" id="CP002684">
    <property type="protein sequence ID" value="AEE33186.1"/>
    <property type="molecule type" value="Genomic_DNA"/>
</dbReference>
<dbReference type="EMBL" id="AK176675">
    <property type="protein sequence ID" value="BAD44438.1"/>
    <property type="molecule type" value="mRNA"/>
</dbReference>
<dbReference type="PIR" id="G96592">
    <property type="entry name" value="G96592"/>
</dbReference>
<dbReference type="RefSeq" id="NP_564676.1">
    <molecule id="Q67XZ3-1"/>
    <property type="nucleotide sequence ID" value="NM_104385.4"/>
</dbReference>
<dbReference type="SMR" id="Q67XZ3"/>
<dbReference type="FunCoup" id="Q67XZ3">
    <property type="interactions" value="229"/>
</dbReference>
<dbReference type="STRING" id="3702.Q67XZ3"/>
<dbReference type="CAZy" id="GH32">
    <property type="family name" value="Glycoside Hydrolase Family 32"/>
</dbReference>
<dbReference type="GlyCosmos" id="Q67XZ3">
    <property type="glycosylation" value="4 sites, No reported glycans"/>
</dbReference>
<dbReference type="GlyGen" id="Q67XZ3">
    <property type="glycosylation" value="4 sites"/>
</dbReference>
<dbReference type="PaxDb" id="3702-AT1G55120.1"/>
<dbReference type="ProteomicsDB" id="248470">
    <molecule id="Q67XZ3-1"/>
</dbReference>
<dbReference type="EnsemblPlants" id="AT1G55120.1">
    <molecule id="Q67XZ3-1"/>
    <property type="protein sequence ID" value="AT1G55120.1"/>
    <property type="gene ID" value="AT1G55120"/>
</dbReference>
<dbReference type="GeneID" id="841955"/>
<dbReference type="Gramene" id="AT1G55120.1">
    <molecule id="Q67XZ3-1"/>
    <property type="protein sequence ID" value="AT1G55120.1"/>
    <property type="gene ID" value="AT1G55120"/>
</dbReference>
<dbReference type="KEGG" id="ath:AT1G55120"/>
<dbReference type="Araport" id="AT1G55120"/>
<dbReference type="TAIR" id="AT1G55120">
    <property type="gene designation" value="FRUCT5"/>
</dbReference>
<dbReference type="eggNOG" id="KOG0228">
    <property type="taxonomic scope" value="Eukaryota"/>
</dbReference>
<dbReference type="HOGENOM" id="CLU_001528_6_0_1"/>
<dbReference type="InParanoid" id="Q67XZ3"/>
<dbReference type="OrthoDB" id="202537at2759"/>
<dbReference type="PhylomeDB" id="Q67XZ3"/>
<dbReference type="BioCyc" id="ARA:AT1G55120-MONOMER"/>
<dbReference type="BRENDA" id="3.2.1.80">
    <property type="organism ID" value="399"/>
</dbReference>
<dbReference type="PRO" id="PR:Q67XZ3"/>
<dbReference type="Proteomes" id="UP000006548">
    <property type="component" value="Chromosome 1"/>
</dbReference>
<dbReference type="ExpressionAtlas" id="Q67XZ3">
    <property type="expression patterns" value="baseline and differential"/>
</dbReference>
<dbReference type="GO" id="GO:0048046">
    <property type="term" value="C:apoplast"/>
    <property type="evidence" value="ECO:0007669"/>
    <property type="project" value="UniProtKB-SubCell"/>
</dbReference>
<dbReference type="GO" id="GO:0000325">
    <property type="term" value="C:plant-type vacuole"/>
    <property type="evidence" value="ECO:0007005"/>
    <property type="project" value="TAIR"/>
</dbReference>
<dbReference type="GO" id="GO:0051669">
    <property type="term" value="F:fructan beta-fructosidase activity"/>
    <property type="evidence" value="ECO:0007669"/>
    <property type="project" value="UniProtKB-EC"/>
</dbReference>
<dbReference type="GO" id="GO:0005975">
    <property type="term" value="P:carbohydrate metabolic process"/>
    <property type="evidence" value="ECO:0007669"/>
    <property type="project" value="InterPro"/>
</dbReference>
<dbReference type="CDD" id="cd18624">
    <property type="entry name" value="GH32_Fruct1-like"/>
    <property type="match status" value="1"/>
</dbReference>
<dbReference type="FunFam" id="2.115.10.20:FF:000001">
    <property type="entry name" value="Beta-fructofuranosidase, insoluble isoenzyme CWINV1"/>
    <property type="match status" value="1"/>
</dbReference>
<dbReference type="FunFam" id="2.60.120.560:FF:000002">
    <property type="entry name" value="Beta-fructofuranosidase, insoluble isoenzyme CWINV1"/>
    <property type="match status" value="1"/>
</dbReference>
<dbReference type="Gene3D" id="2.60.120.560">
    <property type="entry name" value="Exo-inulinase, domain 1"/>
    <property type="match status" value="1"/>
</dbReference>
<dbReference type="Gene3D" id="2.115.10.20">
    <property type="entry name" value="Glycosyl hydrolase domain, family 43"/>
    <property type="match status" value="1"/>
</dbReference>
<dbReference type="InterPro" id="IPR013320">
    <property type="entry name" value="ConA-like_dom_sf"/>
</dbReference>
<dbReference type="InterPro" id="IPR050551">
    <property type="entry name" value="Fructan_Metab_Enzymes"/>
</dbReference>
<dbReference type="InterPro" id="IPR001362">
    <property type="entry name" value="Glyco_hydro_32"/>
</dbReference>
<dbReference type="InterPro" id="IPR018053">
    <property type="entry name" value="Glyco_hydro_32_AS"/>
</dbReference>
<dbReference type="InterPro" id="IPR013189">
    <property type="entry name" value="Glyco_hydro_32_C"/>
</dbReference>
<dbReference type="InterPro" id="IPR013148">
    <property type="entry name" value="Glyco_hydro_32_N"/>
</dbReference>
<dbReference type="InterPro" id="IPR023296">
    <property type="entry name" value="Glyco_hydro_beta-prop_sf"/>
</dbReference>
<dbReference type="PANTHER" id="PTHR31953">
    <property type="entry name" value="BETA-FRUCTOFURANOSIDASE, INSOLUBLE ISOENZYME CWINV1-RELATED"/>
    <property type="match status" value="1"/>
</dbReference>
<dbReference type="Pfam" id="PF08244">
    <property type="entry name" value="Glyco_hydro_32C"/>
    <property type="match status" value="1"/>
</dbReference>
<dbReference type="Pfam" id="PF00251">
    <property type="entry name" value="Glyco_hydro_32N"/>
    <property type="match status" value="1"/>
</dbReference>
<dbReference type="SMART" id="SM00640">
    <property type="entry name" value="Glyco_32"/>
    <property type="match status" value="1"/>
</dbReference>
<dbReference type="SUPFAM" id="SSF75005">
    <property type="entry name" value="Arabinanase/levansucrase/invertase"/>
    <property type="match status" value="1"/>
</dbReference>
<dbReference type="SUPFAM" id="SSF49899">
    <property type="entry name" value="Concanavalin A-like lectins/glucanases"/>
    <property type="match status" value="1"/>
</dbReference>
<dbReference type="PROSITE" id="PS00609">
    <property type="entry name" value="GLYCOSYL_HYDROL_F32"/>
    <property type="match status" value="1"/>
</dbReference>
<sequence length="594" mass="67068">MAKLNRSNIGLSLLLSMFLANFITDLEASSHQDLNQPYRTGYHFQPLKNWMNDPNGPMIYKGIYHLFYQYNPYGAVWDVRIVWGHSTSVDLVNWISQPPAFNPSQPSDINGCWSGSVTILPNGKPVILYTGIDQNKGQVQNVAVPVNISDPYLREWSKPPQNPLMTTNAVNGINPDRFRDPTTAWLGRDGEWRVIVGSSTDDRRGLAILYKSRDFFNWTQSMKPLHYEDLTGMWECPDFFPVSITGSDGVETSSVGENGIKHVLKVSLIETLHDYYTIGSYDREKDVYVPDLGFVQNESAPRLDYGKYYASKTFYDDVKKRRILWGWVNESSPAKDDIEKGWSGLQSFPRKIWLDESGKELLQWPIEEIETLRGQQVNWQKKVLKAGSTLQVHGVTAAQADVEVSFKVKELEKADVIEPSWTDPQKICSQGDLSVMSGLGPFGLMVLASNDMEEYTSVYFRIFKSNDDTNKKTKYVVLMCSDQSRSSLNDENDKSTFGAFVAIDPSHQTISLRTLIDHSIVESYGGGGRTCITSRVYPKLAIGENANLFVFNKGTQSVDILTLSAWSLKSAQINGDLMSPFIEREESRSPNHQF</sequence>
<comment type="function">
    <text evidence="6">6-fructan exohydrolase that can use phlein, levan, neokestose, levanbiose, 6-kestose, and 1-kestose as substrates.</text>
</comment>
<comment type="catalytic activity">
    <reaction>
        <text>Hydrolysis of terminal, non-reducing (2-&gt;1)- and (2-&gt;6)-linked beta-D-fructofuranose residues in fructans.</text>
        <dbReference type="EC" id="3.2.1.80"/>
    </reaction>
</comment>
<comment type="subcellular location">
    <subcellularLocation>
        <location evidence="7">Secreted</location>
        <location evidence="7">Extracellular space</location>
        <location evidence="7">Apoplast</location>
    </subcellularLocation>
    <subcellularLocation>
        <location evidence="7">Secreted</location>
        <location evidence="7">Cell wall</location>
    </subcellularLocation>
    <text evidence="7">Associated to the cell wall.</text>
</comment>
<comment type="alternative products">
    <event type="alternative splicing"/>
    <isoform>
        <id>Q67XZ3-1</id>
        <name>1</name>
        <sequence type="displayed"/>
    </isoform>
    <text>A number of isoforms are produced. According to EST sequences.</text>
</comment>
<comment type="tissue specificity">
    <text evidence="4 5">Expressed in seedlings, leaves, flowers, and seeds.</text>
</comment>
<comment type="similarity">
    <text evidence="7">Belongs to the glycosyl hydrolase 32 family.</text>
</comment>
<comment type="caution">
    <text evidence="7">Seems to not have any beta-fructofuranosidase activity.</text>
</comment>
<comment type="sequence caution" evidence="7">
    <conflict type="erroneous gene model prediction">
        <sequence resource="EMBL-CDS" id="AAG50837"/>
    </conflict>
</comment>
<name>INV3_ARATH</name>
<accession>Q67XZ3</accession>
<accession>Q9C721</accession>
<accession>Q9SLS5</accession>